<organism>
    <name type="scientific">Arabidopsis thaliana</name>
    <name type="common">Mouse-ear cress</name>
    <dbReference type="NCBI Taxonomy" id="3702"/>
    <lineage>
        <taxon>Eukaryota</taxon>
        <taxon>Viridiplantae</taxon>
        <taxon>Streptophyta</taxon>
        <taxon>Embryophyta</taxon>
        <taxon>Tracheophyta</taxon>
        <taxon>Spermatophyta</taxon>
        <taxon>Magnoliopsida</taxon>
        <taxon>eudicotyledons</taxon>
        <taxon>Gunneridae</taxon>
        <taxon>Pentapetalae</taxon>
        <taxon>rosids</taxon>
        <taxon>malvids</taxon>
        <taxon>Brassicales</taxon>
        <taxon>Brassicaceae</taxon>
        <taxon>Camelineae</taxon>
        <taxon>Arabidopsis</taxon>
    </lineage>
</organism>
<comment type="function">
    <text evidence="3">Involved in floral organ shedding.</text>
</comment>
<comment type="subunit">
    <text evidence="1">Homodimer and heterodimers.</text>
</comment>
<comment type="subcellular location">
    <subcellularLocation>
        <location evidence="1">Cell membrane</location>
        <topology evidence="1">Multi-pass membrane protein</topology>
    </subcellularLocation>
</comment>
<comment type="alternative products">
    <event type="alternative splicing"/>
    <isoform>
        <id>Q9LUL1-1</id>
        <name>1</name>
        <sequence type="displayed"/>
    </isoform>
    <text evidence="3">A number of isoforms are produced.</text>
</comment>
<comment type="tissue specificity">
    <text evidence="3">Mostly expressed in flowers and buds and, to a lower extent, in roots and yellow siliques. Localized in the floral organ abscission zone.</text>
</comment>
<comment type="disruption phenotype">
    <text evidence="3">Delayed timing of petal abscission.</text>
</comment>
<comment type="similarity">
    <text evidence="4">Belongs to the Casparian strip membrane proteins (CASP) family.</text>
</comment>
<name>CSPLE_ARATH</name>
<gene>
    <name type="ordered locus">At3g14380</name>
    <name type="ORF">MLN21.16</name>
</gene>
<accession>Q9LUL1</accession>
<keyword id="KW-0025">Alternative splicing</keyword>
<keyword id="KW-1003">Cell membrane</keyword>
<keyword id="KW-0472">Membrane</keyword>
<keyword id="KW-1185">Reference proteome</keyword>
<keyword id="KW-0812">Transmembrane</keyword>
<keyword id="KW-1133">Transmembrane helix</keyword>
<proteinExistence type="evidence at transcript level"/>
<evidence type="ECO:0000250" key="1"/>
<evidence type="ECO:0000255" key="2"/>
<evidence type="ECO:0000269" key="3">
    <source>
    </source>
</evidence>
<evidence type="ECO:0000305" key="4"/>
<dbReference type="EMBL" id="AB022220">
    <property type="protein sequence ID" value="BAB01043.1"/>
    <property type="molecule type" value="Genomic_DNA"/>
</dbReference>
<dbReference type="EMBL" id="CP002686">
    <property type="protein sequence ID" value="AEE75510.1"/>
    <property type="molecule type" value="Genomic_DNA"/>
</dbReference>
<dbReference type="EMBL" id="BX825321">
    <property type="status" value="NOT_ANNOTATED_CDS"/>
    <property type="molecule type" value="mRNA"/>
</dbReference>
<dbReference type="RefSeq" id="NP_188055.1">
    <molecule id="Q9LUL1-1"/>
    <property type="nucleotide sequence ID" value="NM_112296.3"/>
</dbReference>
<dbReference type="SMR" id="Q9LUL1"/>
<dbReference type="STRING" id="3702.Q9LUL1"/>
<dbReference type="iPTMnet" id="Q9LUL1"/>
<dbReference type="PaxDb" id="3702-AT3G14380.1"/>
<dbReference type="ProteomicsDB" id="222686">
    <molecule id="Q9LUL1-1"/>
</dbReference>
<dbReference type="EnsemblPlants" id="AT3G14380.1">
    <molecule id="Q9LUL1-1"/>
    <property type="protein sequence ID" value="AT3G14380.1"/>
    <property type="gene ID" value="AT3G14380"/>
</dbReference>
<dbReference type="GeneID" id="820659"/>
<dbReference type="Gramene" id="AT3G14380.1">
    <molecule id="Q9LUL1-1"/>
    <property type="protein sequence ID" value="AT3G14380.1"/>
    <property type="gene ID" value="AT3G14380"/>
</dbReference>
<dbReference type="KEGG" id="ath:AT3G14380"/>
<dbReference type="Araport" id="AT3G14380"/>
<dbReference type="TAIR" id="AT3G14380">
    <property type="gene designation" value="CASPL2A2"/>
</dbReference>
<dbReference type="eggNOG" id="ENOG502S0J7">
    <property type="taxonomic scope" value="Eukaryota"/>
</dbReference>
<dbReference type="HOGENOM" id="CLU_066104_2_2_1"/>
<dbReference type="InParanoid" id="Q9LUL1"/>
<dbReference type="OMA" id="VIMIKNS"/>
<dbReference type="PhylomeDB" id="Q9LUL1"/>
<dbReference type="PRO" id="PR:Q9LUL1"/>
<dbReference type="Proteomes" id="UP000006548">
    <property type="component" value="Chromosome 3"/>
</dbReference>
<dbReference type="ExpressionAtlas" id="Q9LUL1">
    <property type="expression patterns" value="baseline and differential"/>
</dbReference>
<dbReference type="GO" id="GO:0005886">
    <property type="term" value="C:plasma membrane"/>
    <property type="evidence" value="ECO:0007669"/>
    <property type="project" value="UniProtKB-SubCell"/>
</dbReference>
<dbReference type="GO" id="GO:0010227">
    <property type="term" value="P:floral organ abscission"/>
    <property type="evidence" value="ECO:0000270"/>
    <property type="project" value="TAIR"/>
</dbReference>
<dbReference type="InterPro" id="IPR006459">
    <property type="entry name" value="CASP/CASPL"/>
</dbReference>
<dbReference type="InterPro" id="IPR006702">
    <property type="entry name" value="CASP_dom"/>
</dbReference>
<dbReference type="NCBIfam" id="TIGR01569">
    <property type="entry name" value="A_tha_TIGR01569"/>
    <property type="match status" value="1"/>
</dbReference>
<dbReference type="PANTHER" id="PTHR33573:SF46">
    <property type="entry name" value="CASP-LIKE PROTEIN 2A1"/>
    <property type="match status" value="1"/>
</dbReference>
<dbReference type="PANTHER" id="PTHR33573">
    <property type="entry name" value="CASP-LIKE PROTEIN 4A4"/>
    <property type="match status" value="1"/>
</dbReference>
<dbReference type="Pfam" id="PF04535">
    <property type="entry name" value="CASP_dom"/>
    <property type="match status" value="1"/>
</dbReference>
<feature type="chain" id="PRO_0000308667" description="CASP-like protein 2A2">
    <location>
        <begin position="1"/>
        <end position="178"/>
    </location>
</feature>
<feature type="topological domain" description="Cytoplasmic" evidence="2">
    <location>
        <begin position="1"/>
        <end position="22"/>
    </location>
</feature>
<feature type="transmembrane region" description="Helical" evidence="2">
    <location>
        <begin position="23"/>
        <end position="43"/>
    </location>
</feature>
<feature type="topological domain" description="Extracellular" evidence="2">
    <location>
        <begin position="44"/>
        <end position="69"/>
    </location>
</feature>
<feature type="transmembrane region" description="Helical" evidence="2">
    <location>
        <begin position="70"/>
        <end position="90"/>
    </location>
</feature>
<feature type="topological domain" description="Cytoplasmic" evidence="2">
    <location>
        <begin position="91"/>
        <end position="96"/>
    </location>
</feature>
<feature type="transmembrane region" description="Helical" evidence="2">
    <location>
        <begin position="97"/>
        <end position="117"/>
    </location>
</feature>
<feature type="topological domain" description="Extracellular" evidence="2">
    <location>
        <begin position="118"/>
        <end position="145"/>
    </location>
</feature>
<feature type="transmembrane region" description="Helical" evidence="2">
    <location>
        <begin position="146"/>
        <end position="166"/>
    </location>
</feature>
<feature type="topological domain" description="Cytoplasmic" evidence="2">
    <location>
        <begin position="167"/>
        <end position="178"/>
    </location>
</feature>
<feature type="sequence conflict" description="In Ref. 3; BX825321." evidence="4" ref="3">
    <original>D</original>
    <variation>N</variation>
    <location>
        <position position="137"/>
    </location>
</feature>
<protein>
    <recommendedName>
        <fullName>CASP-like protein 2A2</fullName>
        <shortName>AtCASPL2A2</shortName>
    </recommendedName>
</protein>
<reference key="1">
    <citation type="journal article" date="2000" name="DNA Res.">
        <title>Structural analysis of Arabidopsis thaliana chromosome 3. I. Sequence features of the regions of 4,504,864 bp covered by sixty P1 and TAC clones.</title>
        <authorList>
            <person name="Sato S."/>
            <person name="Nakamura Y."/>
            <person name="Kaneko T."/>
            <person name="Katoh T."/>
            <person name="Asamizu E."/>
            <person name="Tabata S."/>
        </authorList>
    </citation>
    <scope>NUCLEOTIDE SEQUENCE [LARGE SCALE GENOMIC DNA]</scope>
    <source>
        <strain>cv. Columbia</strain>
    </source>
</reference>
<reference key="2">
    <citation type="journal article" date="2017" name="Plant J.">
        <title>Araport11: a complete reannotation of the Arabidopsis thaliana reference genome.</title>
        <authorList>
            <person name="Cheng C.Y."/>
            <person name="Krishnakumar V."/>
            <person name="Chan A.P."/>
            <person name="Thibaud-Nissen F."/>
            <person name="Schobel S."/>
            <person name="Town C.D."/>
        </authorList>
    </citation>
    <scope>GENOME REANNOTATION</scope>
    <source>
        <strain>cv. Columbia</strain>
    </source>
</reference>
<reference key="3">
    <citation type="journal article" date="2004" name="Genome Res.">
        <title>Whole genome sequence comparisons and 'full-length' cDNA sequences: a combined approach to evaluate and improve Arabidopsis genome annotation.</title>
        <authorList>
            <person name="Castelli V."/>
            <person name="Aury J.-M."/>
            <person name="Jaillon O."/>
            <person name="Wincker P."/>
            <person name="Clepet C."/>
            <person name="Menard M."/>
            <person name="Cruaud C."/>
            <person name="Quetier F."/>
            <person name="Scarpelli C."/>
            <person name="Schaechter V."/>
            <person name="Temple G."/>
            <person name="Caboche M."/>
            <person name="Weissenbach J."/>
            <person name="Salanoubat M."/>
        </authorList>
    </citation>
    <scope>NUCLEOTIDE SEQUENCE [LARGE SCALE MRNA]</scope>
    <source>
        <strain>cv. Columbia</strain>
    </source>
</reference>
<reference key="4">
    <citation type="journal article" date="2012" name="Plant Physiol.">
        <title>A novel approach to dissect the abscission process in Arabidopsis.</title>
        <authorList>
            <person name="Gonzalez-Carranza Z.H."/>
            <person name="Shahid A.A."/>
            <person name="Zhang L."/>
            <person name="Liu Y."/>
            <person name="Ninsuwan U."/>
            <person name="Roberts J.A."/>
        </authorList>
    </citation>
    <scope>FUNCTION</scope>
    <scope>DISRUPTION PHENOTYPE</scope>
    <scope>TISSUE SPECIFICITY</scope>
    <scope>ALTERNATIVE SPLICING</scope>
</reference>
<reference key="5">
    <citation type="journal article" date="2014" name="Plant Physiol.">
        <title>Functional and evolutionary analysis of the CASPARIAN STRIP MEMBRANE DOMAIN PROTEIN family.</title>
        <authorList>
            <person name="Roppolo D."/>
            <person name="Boeckmann B."/>
            <person name="Pfister A."/>
            <person name="Boutet E."/>
            <person name="Rubio M.C."/>
            <person name="Denervaud-Tendon V."/>
            <person name="Vermeer J.E."/>
            <person name="Gheyselinck J."/>
            <person name="Xenarios I."/>
            <person name="Geldner N."/>
        </authorList>
    </citation>
    <scope>GENE FAMILY</scope>
    <scope>NOMENCLATURE</scope>
</reference>
<sequence length="178" mass="19184">MDKTDQTAIDESALVLNRTEKSAEAVLRVASMALSITGLVIMIKNSISNEFGSVSYSNIGAFMYLVSANGVCAAYSLLSALAILALPCPISKVQVRTLFLLDQVVTYVVLAAGAVSAETVYLAYYGNIPITWSSACDSYGSFCHNALISVVFTFVVSLLYMLLSLISSYRLFTRFEAP</sequence>